<name>DPOA2_DICDI</name>
<proteinExistence type="inferred from homology"/>
<protein>
    <recommendedName>
        <fullName>DNA polymerase alpha subunit B</fullName>
    </recommendedName>
</protein>
<reference key="1">
    <citation type="journal article" date="2005" name="Nature">
        <title>The genome of the social amoeba Dictyostelium discoideum.</title>
        <authorList>
            <person name="Eichinger L."/>
            <person name="Pachebat J.A."/>
            <person name="Gloeckner G."/>
            <person name="Rajandream M.A."/>
            <person name="Sucgang R."/>
            <person name="Berriman M."/>
            <person name="Song J."/>
            <person name="Olsen R."/>
            <person name="Szafranski K."/>
            <person name="Xu Q."/>
            <person name="Tunggal B."/>
            <person name="Kummerfeld S."/>
            <person name="Madera M."/>
            <person name="Konfortov B.A."/>
            <person name="Rivero F."/>
            <person name="Bankier A.T."/>
            <person name="Lehmann R."/>
            <person name="Hamlin N."/>
            <person name="Davies R."/>
            <person name="Gaudet P."/>
            <person name="Fey P."/>
            <person name="Pilcher K."/>
            <person name="Chen G."/>
            <person name="Saunders D."/>
            <person name="Sodergren E.J."/>
            <person name="Davis P."/>
            <person name="Kerhornou A."/>
            <person name="Nie X."/>
            <person name="Hall N."/>
            <person name="Anjard C."/>
            <person name="Hemphill L."/>
            <person name="Bason N."/>
            <person name="Farbrother P."/>
            <person name="Desany B."/>
            <person name="Just E."/>
            <person name="Morio T."/>
            <person name="Rost R."/>
            <person name="Churcher C.M."/>
            <person name="Cooper J."/>
            <person name="Haydock S."/>
            <person name="van Driessche N."/>
            <person name="Cronin A."/>
            <person name="Goodhead I."/>
            <person name="Muzny D.M."/>
            <person name="Mourier T."/>
            <person name="Pain A."/>
            <person name="Lu M."/>
            <person name="Harper D."/>
            <person name="Lindsay R."/>
            <person name="Hauser H."/>
            <person name="James K.D."/>
            <person name="Quiles M."/>
            <person name="Madan Babu M."/>
            <person name="Saito T."/>
            <person name="Buchrieser C."/>
            <person name="Wardroper A."/>
            <person name="Felder M."/>
            <person name="Thangavelu M."/>
            <person name="Johnson D."/>
            <person name="Knights A."/>
            <person name="Loulseged H."/>
            <person name="Mungall K.L."/>
            <person name="Oliver K."/>
            <person name="Price C."/>
            <person name="Quail M.A."/>
            <person name="Urushihara H."/>
            <person name="Hernandez J."/>
            <person name="Rabbinowitsch E."/>
            <person name="Steffen D."/>
            <person name="Sanders M."/>
            <person name="Ma J."/>
            <person name="Kohara Y."/>
            <person name="Sharp S."/>
            <person name="Simmonds M.N."/>
            <person name="Spiegler S."/>
            <person name="Tivey A."/>
            <person name="Sugano S."/>
            <person name="White B."/>
            <person name="Walker D."/>
            <person name="Woodward J.R."/>
            <person name="Winckler T."/>
            <person name="Tanaka Y."/>
            <person name="Shaulsky G."/>
            <person name="Schleicher M."/>
            <person name="Weinstock G.M."/>
            <person name="Rosenthal A."/>
            <person name="Cox E.C."/>
            <person name="Chisholm R.L."/>
            <person name="Gibbs R.A."/>
            <person name="Loomis W.F."/>
            <person name="Platzer M."/>
            <person name="Kay R.R."/>
            <person name="Williams J.G."/>
            <person name="Dear P.H."/>
            <person name="Noegel A.A."/>
            <person name="Barrell B.G."/>
            <person name="Kuspa A."/>
        </authorList>
    </citation>
    <scope>NUCLEOTIDE SEQUENCE [LARGE SCALE GENOMIC DNA]</scope>
    <source>
        <strain>AX4</strain>
    </source>
</reference>
<feature type="chain" id="PRO_0000371219" description="DNA polymerase alpha subunit B">
    <location>
        <begin position="1"/>
        <end position="623"/>
    </location>
</feature>
<feature type="region of interest" description="Disordered" evidence="2">
    <location>
        <begin position="113"/>
        <end position="151"/>
    </location>
</feature>
<feature type="compositionally biased region" description="Polar residues" evidence="2">
    <location>
        <begin position="121"/>
        <end position="130"/>
    </location>
</feature>
<comment type="function">
    <text evidence="1">May play an essential role at the early stage of chromosomal DNA replication by coupling the polymerase alpha/primase complex to the cellular replication machinery.</text>
</comment>
<comment type="subunit">
    <text evidence="1">DNA polymerase alpha:primase is a four subunit enzyme complex, which is assembled throughout the cell cycle, and consists of the two DNA polymerase subunits A and B, and the DNA primase large and small subunits. Subunit B binds to subunit A (By similarity).</text>
</comment>
<comment type="subcellular location">
    <subcellularLocation>
        <location evidence="1">Nucleus</location>
    </subcellularLocation>
</comment>
<comment type="similarity">
    <text evidence="3">Belongs to the DNA polymerase alpha subunit B family.</text>
</comment>
<keyword id="KW-0235">DNA replication</keyword>
<keyword id="KW-0539">Nucleus</keyword>
<keyword id="KW-0597">Phosphoprotein</keyword>
<keyword id="KW-1185">Reference proteome</keyword>
<sequence>MDSSLFSLKNSFGGFNDEELLRVQKIIEDLELTESIVSKEWVTFALQKKIAEDYSKHLDPFKVFLKKNIKKLKVQKTTEQIKEVAEEDPKMFENVEIEDIIFDTDSLVDESEIPKIKDEPSSSVDVSTARNKNNHNNNNNNNPSLPNKSMFKPTKQEMTNDNIKKVVIADDIGDFDFTTANQPIKQSNPTQLLNYKERKNIGGISYSMNNNEELKTDLSLREKKSCDLKGAGEEFYPIKYHRDTLEQRTKILKESVQSNNYTFPVSLDCQDDESIVRSVGRVWMYDQETILSKRFYLLGNERDSSSSGGSSGSASIFSLENNIPDYSMFSGQVVMAESKKIAGSHFYYTNKLYTPNPLPFFSQRKECGDINVMIASGPFDLQKSTPDYTPLDDLCNVVSNKKPHILFLMGPFIDESNVHIKKYSETFSELFNNLMKKLNDNIPSTTKVLIVPSLNDVDHEYIFPQPPYVPSVNLNSNILFVPNPFTLIINESFTIGITSSDIYNNLVSKAHFKNKHTPEDIFNMIINQNNYYPMHPAQAPISMRYLQHLNFPGFTPDILVVPKNSPIAAISNDVLCLGVPPIVGNKSTFGSYAELTVTKSKQSLAFDNNIPVSKRTIVNFKNI</sequence>
<evidence type="ECO:0000250" key="1"/>
<evidence type="ECO:0000256" key="2">
    <source>
        <dbReference type="SAM" id="MobiDB-lite"/>
    </source>
</evidence>
<evidence type="ECO:0000305" key="3"/>
<gene>
    <name type="primary">polA2</name>
    <name type="ORF">DDB_0232277</name>
</gene>
<organism>
    <name type="scientific">Dictyostelium discoideum</name>
    <name type="common">Social amoeba</name>
    <dbReference type="NCBI Taxonomy" id="44689"/>
    <lineage>
        <taxon>Eukaryota</taxon>
        <taxon>Amoebozoa</taxon>
        <taxon>Evosea</taxon>
        <taxon>Eumycetozoa</taxon>
        <taxon>Dictyostelia</taxon>
        <taxon>Dictyosteliales</taxon>
        <taxon>Dictyosteliaceae</taxon>
        <taxon>Dictyostelium</taxon>
    </lineage>
</organism>
<accession>Q54S08</accession>
<dbReference type="EMBL" id="AAFI02000047">
    <property type="protein sequence ID" value="EAL66225.2"/>
    <property type="molecule type" value="Genomic_DNA"/>
</dbReference>
<dbReference type="RefSeq" id="XP_640231.2">
    <property type="nucleotide sequence ID" value="XM_635139.2"/>
</dbReference>
<dbReference type="SMR" id="Q54S08"/>
<dbReference type="FunCoup" id="Q54S08">
    <property type="interactions" value="46"/>
</dbReference>
<dbReference type="STRING" id="44689.Q54S08"/>
<dbReference type="PaxDb" id="44689-DDB0304676"/>
<dbReference type="EnsemblProtists" id="EAL66225">
    <property type="protein sequence ID" value="EAL66225"/>
    <property type="gene ID" value="DDB_G0282731"/>
</dbReference>
<dbReference type="GeneID" id="8623771"/>
<dbReference type="KEGG" id="ddi:DDB_G0282731"/>
<dbReference type="dictyBase" id="DDB_G0282731">
    <property type="gene designation" value="polA2"/>
</dbReference>
<dbReference type="VEuPathDB" id="AmoebaDB:DDB_G0282731"/>
<dbReference type="eggNOG" id="KOG1625">
    <property type="taxonomic scope" value="Eukaryota"/>
</dbReference>
<dbReference type="HOGENOM" id="CLU_439059_0_0_1"/>
<dbReference type="InParanoid" id="Q54S08"/>
<dbReference type="OMA" id="ECLIMIS"/>
<dbReference type="PhylomeDB" id="Q54S08"/>
<dbReference type="Reactome" id="R-DDI-113501">
    <property type="pathway name" value="Inhibition of replication initiation of damaged DNA by RB1/E2F1"/>
</dbReference>
<dbReference type="Reactome" id="R-DDI-68952">
    <property type="pathway name" value="DNA replication initiation"/>
</dbReference>
<dbReference type="Reactome" id="R-DDI-68962">
    <property type="pathway name" value="Activation of the pre-replicative complex"/>
</dbReference>
<dbReference type="Reactome" id="R-DDI-69091">
    <property type="pathway name" value="Polymerase switching"/>
</dbReference>
<dbReference type="Reactome" id="R-DDI-69166">
    <property type="pathway name" value="Removal of the Flap Intermediate"/>
</dbReference>
<dbReference type="Reactome" id="R-DDI-69183">
    <property type="pathway name" value="Processive synthesis on the lagging strand"/>
</dbReference>
<dbReference type="PRO" id="PR:Q54S08"/>
<dbReference type="Proteomes" id="UP000002195">
    <property type="component" value="Chromosome 3"/>
</dbReference>
<dbReference type="GO" id="GO:0005658">
    <property type="term" value="C:alpha DNA polymerase:primase complex"/>
    <property type="evidence" value="ECO:0000318"/>
    <property type="project" value="GO_Central"/>
</dbReference>
<dbReference type="GO" id="GO:0003677">
    <property type="term" value="F:DNA binding"/>
    <property type="evidence" value="ECO:0007669"/>
    <property type="project" value="InterPro"/>
</dbReference>
<dbReference type="GO" id="GO:0006270">
    <property type="term" value="P:DNA replication initiation"/>
    <property type="evidence" value="ECO:0000318"/>
    <property type="project" value="GO_Central"/>
</dbReference>
<dbReference type="FunFam" id="3.60.21.60:FF:000016">
    <property type="entry name" value="DNA polymerase alpha subunit B-like"/>
    <property type="match status" value="1"/>
</dbReference>
<dbReference type="Gene3D" id="3.60.21.60">
    <property type="match status" value="1"/>
</dbReference>
<dbReference type="InterPro" id="IPR007185">
    <property type="entry name" value="DNA_pol_a/d/e_bsu"/>
</dbReference>
<dbReference type="InterPro" id="IPR016722">
    <property type="entry name" value="DNA_pol_alpha_bsu"/>
</dbReference>
<dbReference type="PANTHER" id="PTHR23061">
    <property type="entry name" value="DNA POLYMERASE 2 ALPHA 70 KDA SUBUNIT"/>
    <property type="match status" value="1"/>
</dbReference>
<dbReference type="PANTHER" id="PTHR23061:SF12">
    <property type="entry name" value="DNA POLYMERASE ALPHA SUBUNIT B"/>
    <property type="match status" value="1"/>
</dbReference>
<dbReference type="Pfam" id="PF04042">
    <property type="entry name" value="DNA_pol_E_B"/>
    <property type="match status" value="1"/>
</dbReference>